<gene>
    <name type="ordered locus">AF_2123</name>
</gene>
<protein>
    <recommendedName>
        <fullName>Uncharacterized protein AF_2123</fullName>
    </recommendedName>
</protein>
<organism>
    <name type="scientific">Archaeoglobus fulgidus (strain ATCC 49558 / DSM 4304 / JCM 9628 / NBRC 100126 / VC-16)</name>
    <dbReference type="NCBI Taxonomy" id="224325"/>
    <lineage>
        <taxon>Archaea</taxon>
        <taxon>Methanobacteriati</taxon>
        <taxon>Methanobacteriota</taxon>
        <taxon>Archaeoglobi</taxon>
        <taxon>Archaeoglobales</taxon>
        <taxon>Archaeoglobaceae</taxon>
        <taxon>Archaeoglobus</taxon>
    </lineage>
</organism>
<proteinExistence type="predicted"/>
<name>Y2123_ARCFU</name>
<dbReference type="EMBL" id="AE000782">
    <property type="protein sequence ID" value="AAB89148.1"/>
    <property type="molecule type" value="Genomic_DNA"/>
</dbReference>
<dbReference type="PIR" id="C69515">
    <property type="entry name" value="C69515"/>
</dbReference>
<dbReference type="RefSeq" id="WP_010879614.1">
    <property type="nucleotide sequence ID" value="NC_000917.1"/>
</dbReference>
<dbReference type="STRING" id="224325.AF_2123"/>
<dbReference type="PaxDb" id="224325-AF_2123"/>
<dbReference type="EnsemblBacteria" id="AAB89148">
    <property type="protein sequence ID" value="AAB89148"/>
    <property type="gene ID" value="AF_2123"/>
</dbReference>
<dbReference type="KEGG" id="afu:AF_2123"/>
<dbReference type="HOGENOM" id="CLU_1801582_0_0_2"/>
<dbReference type="Proteomes" id="UP000002199">
    <property type="component" value="Chromosome"/>
</dbReference>
<reference key="1">
    <citation type="journal article" date="1997" name="Nature">
        <title>The complete genome sequence of the hyperthermophilic, sulphate-reducing archaeon Archaeoglobus fulgidus.</title>
        <authorList>
            <person name="Klenk H.-P."/>
            <person name="Clayton R.A."/>
            <person name="Tomb J.-F."/>
            <person name="White O."/>
            <person name="Nelson K.E."/>
            <person name="Ketchum K.A."/>
            <person name="Dodson R.J."/>
            <person name="Gwinn M.L."/>
            <person name="Hickey E.K."/>
            <person name="Peterson J.D."/>
            <person name="Richardson D.L."/>
            <person name="Kerlavage A.R."/>
            <person name="Graham D.E."/>
            <person name="Kyrpides N.C."/>
            <person name="Fleischmann R.D."/>
            <person name="Quackenbush J."/>
            <person name="Lee N.H."/>
            <person name="Sutton G.G."/>
            <person name="Gill S.R."/>
            <person name="Kirkness E.F."/>
            <person name="Dougherty B.A."/>
            <person name="McKenney K."/>
            <person name="Adams M.D."/>
            <person name="Loftus B.J."/>
            <person name="Peterson S.N."/>
            <person name="Reich C.I."/>
            <person name="McNeil L.K."/>
            <person name="Badger J.H."/>
            <person name="Glodek A."/>
            <person name="Zhou L."/>
            <person name="Overbeek R."/>
            <person name="Gocayne J.D."/>
            <person name="Weidman J.F."/>
            <person name="McDonald L.A."/>
            <person name="Utterback T.R."/>
            <person name="Cotton M.D."/>
            <person name="Spriggs T."/>
            <person name="Artiach P."/>
            <person name="Kaine B.P."/>
            <person name="Sykes S.M."/>
            <person name="Sadow P.W."/>
            <person name="D'Andrea K.P."/>
            <person name="Bowman C."/>
            <person name="Fujii C."/>
            <person name="Garland S.A."/>
            <person name="Mason T.M."/>
            <person name="Olsen G.J."/>
            <person name="Fraser C.M."/>
            <person name="Smith H.O."/>
            <person name="Woese C.R."/>
            <person name="Venter J.C."/>
        </authorList>
    </citation>
    <scope>NUCLEOTIDE SEQUENCE [LARGE SCALE GENOMIC DNA]</scope>
    <source>
        <strain>ATCC 49558 / DSM 4304 / JCM 9628 / NBRC 100126 / VC-16</strain>
    </source>
</reference>
<accession>O28157</accession>
<feature type="chain" id="PRO_0000128095" description="Uncharacterized protein AF_2123">
    <location>
        <begin position="1"/>
        <end position="143"/>
    </location>
</feature>
<sequence length="143" mass="15395">MANAADFANALMQIVLANFELLTNAFSLLLNNSVDVAEVWNVSIHAAGFGYWFIKPFVGDGGALDVASKNVSAMKNISYAINYIGGNAETIFGNETGQKGLSAVMSHFVGLIDDEFALKVWNLAKSGVEVAMRMLENINSTLR</sequence>
<keyword id="KW-1185">Reference proteome</keyword>